<reference key="1">
    <citation type="submission" date="2008-02" db="EMBL/GenBank/DDBJ databases">
        <title>Complete sequence of chromosome of Methylobacterium sp. 4-46.</title>
        <authorList>
            <consortium name="US DOE Joint Genome Institute"/>
            <person name="Copeland A."/>
            <person name="Lucas S."/>
            <person name="Lapidus A."/>
            <person name="Glavina del Rio T."/>
            <person name="Dalin E."/>
            <person name="Tice H."/>
            <person name="Bruce D."/>
            <person name="Goodwin L."/>
            <person name="Pitluck S."/>
            <person name="Chertkov O."/>
            <person name="Brettin T."/>
            <person name="Detter J.C."/>
            <person name="Han C."/>
            <person name="Kuske C.R."/>
            <person name="Schmutz J."/>
            <person name="Larimer F."/>
            <person name="Land M."/>
            <person name="Hauser L."/>
            <person name="Kyrpides N."/>
            <person name="Ivanova N."/>
            <person name="Marx C.J."/>
            <person name="Richardson P."/>
        </authorList>
    </citation>
    <scope>NUCLEOTIDE SEQUENCE [LARGE SCALE GENOMIC DNA]</scope>
    <source>
        <strain>4-46</strain>
    </source>
</reference>
<organism>
    <name type="scientific">Methylobacterium sp. (strain 4-46)</name>
    <dbReference type="NCBI Taxonomy" id="426117"/>
    <lineage>
        <taxon>Bacteria</taxon>
        <taxon>Pseudomonadati</taxon>
        <taxon>Pseudomonadota</taxon>
        <taxon>Alphaproteobacteria</taxon>
        <taxon>Hyphomicrobiales</taxon>
        <taxon>Methylobacteriaceae</taxon>
        <taxon>Methylobacterium</taxon>
    </lineage>
</organism>
<keyword id="KW-0686">Riboflavin biosynthesis</keyword>
<keyword id="KW-0808">Transferase</keyword>
<comment type="function">
    <text evidence="1">Catalyzes the formation of 6,7-dimethyl-8-ribityllumazine by condensation of 5-amino-6-(D-ribitylamino)uracil with 3,4-dihydroxy-2-butanone 4-phosphate. This is the penultimate step in the biosynthesis of riboflavin.</text>
</comment>
<comment type="catalytic activity">
    <reaction evidence="1">
        <text>(2S)-2-hydroxy-3-oxobutyl phosphate + 5-amino-6-(D-ribitylamino)uracil = 6,7-dimethyl-8-(1-D-ribityl)lumazine + phosphate + 2 H2O + H(+)</text>
        <dbReference type="Rhea" id="RHEA:26152"/>
        <dbReference type="ChEBI" id="CHEBI:15377"/>
        <dbReference type="ChEBI" id="CHEBI:15378"/>
        <dbReference type="ChEBI" id="CHEBI:15934"/>
        <dbReference type="ChEBI" id="CHEBI:43474"/>
        <dbReference type="ChEBI" id="CHEBI:58201"/>
        <dbReference type="ChEBI" id="CHEBI:58830"/>
        <dbReference type="EC" id="2.5.1.78"/>
    </reaction>
</comment>
<comment type="pathway">
    <text evidence="1">Cofactor biosynthesis; riboflavin biosynthesis; riboflavin from 2-hydroxy-3-oxobutyl phosphate and 5-amino-6-(D-ribitylamino)uracil: step 1/2.</text>
</comment>
<comment type="similarity">
    <text evidence="1">Belongs to the DMRL synthase family.</text>
</comment>
<name>RISB_METS4</name>
<feature type="chain" id="PRO_1000195501" description="6,7-dimethyl-8-ribityllumazine synthase">
    <location>
        <begin position="1"/>
        <end position="181"/>
    </location>
</feature>
<feature type="active site" description="Proton donor" evidence="1">
    <location>
        <position position="95"/>
    </location>
</feature>
<feature type="binding site" evidence="1">
    <location>
        <position position="27"/>
    </location>
    <ligand>
        <name>5-amino-6-(D-ribitylamino)uracil</name>
        <dbReference type="ChEBI" id="CHEBI:15934"/>
    </ligand>
</feature>
<feature type="binding site" evidence="1">
    <location>
        <begin position="58"/>
        <end position="60"/>
    </location>
    <ligand>
        <name>5-amino-6-(D-ribitylamino)uracil</name>
        <dbReference type="ChEBI" id="CHEBI:15934"/>
    </ligand>
</feature>
<feature type="binding site" evidence="1">
    <location>
        <begin position="87"/>
        <end position="89"/>
    </location>
    <ligand>
        <name>5-amino-6-(D-ribitylamino)uracil</name>
        <dbReference type="ChEBI" id="CHEBI:15934"/>
    </ligand>
</feature>
<feature type="binding site" evidence="1">
    <location>
        <begin position="92"/>
        <end position="93"/>
    </location>
    <ligand>
        <name>(2S)-2-hydroxy-3-oxobutyl phosphate</name>
        <dbReference type="ChEBI" id="CHEBI:58830"/>
    </ligand>
</feature>
<feature type="binding site" evidence="1">
    <location>
        <position position="120"/>
    </location>
    <ligand>
        <name>5-amino-6-(D-ribitylamino)uracil</name>
        <dbReference type="ChEBI" id="CHEBI:15934"/>
    </ligand>
</feature>
<feature type="binding site" evidence="1">
    <location>
        <position position="134"/>
    </location>
    <ligand>
        <name>(2S)-2-hydroxy-3-oxobutyl phosphate</name>
        <dbReference type="ChEBI" id="CHEBI:58830"/>
    </ligand>
</feature>
<proteinExistence type="inferred from homology"/>
<sequence length="181" mass="19127">MVTPRRDSGKDRPSLKDARILVVEARYYEDIADELLRGATAAIAAAQAEAEVVTVPGALEIPQAVAILVEAAAREARPYDAVVALGCVIRGETGHYDIVAGESARALMDLSVLLRLPLGNGILTVETEAQAQARARVSEMNKGGGAAEAALAVLALKRAKAAERPDRTIGFTPRRTAETQE</sequence>
<protein>
    <recommendedName>
        <fullName evidence="1">6,7-dimethyl-8-ribityllumazine synthase</fullName>
        <shortName evidence="1">DMRL synthase</shortName>
        <shortName evidence="1">LS</shortName>
        <shortName evidence="1">Lumazine synthase</shortName>
        <ecNumber evidence="1">2.5.1.78</ecNumber>
    </recommendedName>
</protein>
<evidence type="ECO:0000255" key="1">
    <source>
        <dbReference type="HAMAP-Rule" id="MF_00178"/>
    </source>
</evidence>
<accession>B0UHS5</accession>
<dbReference type="EC" id="2.5.1.78" evidence="1"/>
<dbReference type="EMBL" id="CP000943">
    <property type="protein sequence ID" value="ACA21045.1"/>
    <property type="molecule type" value="Genomic_DNA"/>
</dbReference>
<dbReference type="RefSeq" id="WP_012336419.1">
    <property type="nucleotide sequence ID" value="NC_010511.1"/>
</dbReference>
<dbReference type="SMR" id="B0UHS5"/>
<dbReference type="STRING" id="426117.M446_6800"/>
<dbReference type="KEGG" id="met:M446_6800"/>
<dbReference type="eggNOG" id="COG0054">
    <property type="taxonomic scope" value="Bacteria"/>
</dbReference>
<dbReference type="HOGENOM" id="CLU_089358_1_2_5"/>
<dbReference type="UniPathway" id="UPA00275">
    <property type="reaction ID" value="UER00404"/>
</dbReference>
<dbReference type="GO" id="GO:0005829">
    <property type="term" value="C:cytosol"/>
    <property type="evidence" value="ECO:0007669"/>
    <property type="project" value="TreeGrafter"/>
</dbReference>
<dbReference type="GO" id="GO:0009349">
    <property type="term" value="C:riboflavin synthase complex"/>
    <property type="evidence" value="ECO:0007669"/>
    <property type="project" value="InterPro"/>
</dbReference>
<dbReference type="GO" id="GO:0000906">
    <property type="term" value="F:6,7-dimethyl-8-ribityllumazine synthase activity"/>
    <property type="evidence" value="ECO:0007669"/>
    <property type="project" value="UniProtKB-UniRule"/>
</dbReference>
<dbReference type="GO" id="GO:0009231">
    <property type="term" value="P:riboflavin biosynthetic process"/>
    <property type="evidence" value="ECO:0007669"/>
    <property type="project" value="UniProtKB-UniRule"/>
</dbReference>
<dbReference type="CDD" id="cd09209">
    <property type="entry name" value="Lumazine_synthase-I"/>
    <property type="match status" value="1"/>
</dbReference>
<dbReference type="Gene3D" id="3.40.50.960">
    <property type="entry name" value="Lumazine/riboflavin synthase"/>
    <property type="match status" value="1"/>
</dbReference>
<dbReference type="HAMAP" id="MF_00178">
    <property type="entry name" value="Lumazine_synth"/>
    <property type="match status" value="1"/>
</dbReference>
<dbReference type="InterPro" id="IPR034964">
    <property type="entry name" value="LS"/>
</dbReference>
<dbReference type="InterPro" id="IPR002180">
    <property type="entry name" value="LS/RS"/>
</dbReference>
<dbReference type="InterPro" id="IPR036467">
    <property type="entry name" value="LS/RS_sf"/>
</dbReference>
<dbReference type="NCBIfam" id="TIGR00114">
    <property type="entry name" value="lumazine-synth"/>
    <property type="match status" value="1"/>
</dbReference>
<dbReference type="PANTHER" id="PTHR21058:SF0">
    <property type="entry name" value="6,7-DIMETHYL-8-RIBITYLLUMAZINE SYNTHASE"/>
    <property type="match status" value="1"/>
</dbReference>
<dbReference type="PANTHER" id="PTHR21058">
    <property type="entry name" value="6,7-DIMETHYL-8-RIBITYLLUMAZINE SYNTHASE DMRL SYNTHASE LUMAZINE SYNTHASE"/>
    <property type="match status" value="1"/>
</dbReference>
<dbReference type="Pfam" id="PF00885">
    <property type="entry name" value="DMRL_synthase"/>
    <property type="match status" value="1"/>
</dbReference>
<dbReference type="SUPFAM" id="SSF52121">
    <property type="entry name" value="Lumazine synthase"/>
    <property type="match status" value="1"/>
</dbReference>
<gene>
    <name evidence="1" type="primary">ribH</name>
    <name type="ordered locus">M446_6800</name>
</gene>